<dbReference type="EMBL" id="M25369">
    <property type="protein sequence ID" value="AAA43554.1"/>
    <property type="molecule type" value="Genomic_RNA"/>
</dbReference>
<dbReference type="PIR" id="B32662">
    <property type="entry name" value="MNIVB1"/>
</dbReference>
<dbReference type="SMR" id="P13150"/>
<dbReference type="GO" id="GO:0042025">
    <property type="term" value="C:host cell nucleus"/>
    <property type="evidence" value="ECO:0007669"/>
    <property type="project" value="UniProtKB-SubCell"/>
</dbReference>
<dbReference type="GO" id="GO:0044423">
    <property type="term" value="C:virion component"/>
    <property type="evidence" value="ECO:0007669"/>
    <property type="project" value="UniProtKB-UniRule"/>
</dbReference>
<dbReference type="GO" id="GO:0039675">
    <property type="term" value="P:exit of virus from host cell nucleus through nuclear pore"/>
    <property type="evidence" value="ECO:0007669"/>
    <property type="project" value="UniProtKB-UniRule"/>
</dbReference>
<dbReference type="Gene3D" id="1.10.287.230">
    <property type="match status" value="1"/>
</dbReference>
<dbReference type="Gene3D" id="1.10.287.10">
    <property type="entry name" value="S15/NS1, RNA-binding"/>
    <property type="match status" value="1"/>
</dbReference>
<dbReference type="HAMAP" id="MF_04067">
    <property type="entry name" value="INFV_NEP"/>
    <property type="match status" value="1"/>
</dbReference>
<dbReference type="InterPro" id="IPR000968">
    <property type="entry name" value="Flu_NS2"/>
</dbReference>
<dbReference type="Pfam" id="PF00601">
    <property type="entry name" value="Flu_NS2"/>
    <property type="match status" value="1"/>
</dbReference>
<dbReference type="SUPFAM" id="SSF101156">
    <property type="entry name" value="Nonstructural protein ns2, Nep, M1-binding domain"/>
    <property type="match status" value="1"/>
</dbReference>
<organism>
    <name type="scientific">Influenza A virus (strain A/Pintail/Alberta/268/1978 H6N2)</name>
    <dbReference type="NCBI Taxonomy" id="11451"/>
    <lineage>
        <taxon>Viruses</taxon>
        <taxon>Riboviria</taxon>
        <taxon>Orthornavirae</taxon>
        <taxon>Negarnaviricota</taxon>
        <taxon>Polyploviricotina</taxon>
        <taxon>Insthoviricetes</taxon>
        <taxon>Articulavirales</taxon>
        <taxon>Orthomyxoviridae</taxon>
        <taxon>Alphainfluenzavirus</taxon>
        <taxon>Alphainfluenzavirus influenzae</taxon>
        <taxon>Influenza A virus</taxon>
    </lineage>
</organism>
<sequence>MDSNTVSSFQDILMRMSKMQLGSSSEDLNGMITQFDSLKLYRDSLGEAVMRMGDLHSLQSRNGKWREQLSQKFEEIRWLIEEVRHRLKITENSFEQITFMQALQLLLEVEQEIRTFSFQLI</sequence>
<proteinExistence type="inferred from homology"/>
<feature type="chain" id="PRO_0000079003" description="Nuclear export protein">
    <location>
        <begin position="1"/>
        <end position="121"/>
    </location>
</feature>
<feature type="short sequence motif" description="Nuclear export signal" evidence="1">
    <location>
        <begin position="12"/>
        <end position="21"/>
    </location>
</feature>
<feature type="short sequence motif" description="Nuclear export signal" evidence="1">
    <location>
        <begin position="85"/>
        <end position="94"/>
    </location>
</feature>
<gene>
    <name evidence="1" type="primary">NS</name>
</gene>
<evidence type="ECO:0000255" key="1">
    <source>
        <dbReference type="HAMAP-Rule" id="MF_04067"/>
    </source>
</evidence>
<accession>P13150</accession>
<keyword id="KW-0025">Alternative splicing</keyword>
<keyword id="KW-1048">Host nucleus</keyword>
<keyword id="KW-0945">Host-virus interaction</keyword>
<keyword id="KW-0813">Transport</keyword>
<keyword id="KW-0946">Virion</keyword>
<reference key="1">
    <citation type="journal article" date="1989" name="Virology">
        <title>The B allele of the NS gene of avian influenza viruses, but not the A allele, attenuates a human influenza A virus for squirrel monkeys.</title>
        <authorList>
            <person name="Treanor J.J."/>
            <person name="Snyder M.H."/>
            <person name="London W.T."/>
            <person name="Murphy B.R."/>
        </authorList>
    </citation>
    <scope>NUCLEOTIDE SEQUENCE [GENOMIC RNA]</scope>
</reference>
<protein>
    <recommendedName>
        <fullName evidence="1">Nuclear export protein</fullName>
        <shortName evidence="1">NEP</shortName>
    </recommendedName>
    <alternativeName>
        <fullName evidence="1">Non-structural protein 2</fullName>
        <shortName evidence="1">NS2</shortName>
    </alternativeName>
</protein>
<organismHost>
    <name type="scientific">Aves</name>
    <dbReference type="NCBI Taxonomy" id="8782"/>
</organismHost>
<name>NEP_I78AA</name>
<comment type="function">
    <text evidence="1">Mediates the nuclear export of encapsidated genomic RNAs (ribonucleoproteins, RNPs). Acts as an adapter between viral RNPs complexes and the nuclear export machinery of the cell. Possesses no intrinsic RNA-binding activity, but includes a C-terminal M1-binding domain. This domain is believed to allow recognition of RNPs bound to the protein M1. Since protein M1 is not available in large quantities before late stages of infection, such an indirect recognition mechanism probably ensures that genomic RNPs are not exported from the host nucleus until sufficient quantities of viral mRNA and progeny genomic RNA have been synthesized. Furthermore, the RNPs enter the host cytoplasm only when associated with the M1 protein that is necessary to guide them to the plasma membrane. May down-regulate viral RNA synthesis when overproduced.</text>
</comment>
<comment type="subunit">
    <text evidence="1">Interacts with protein M1. May interact with host nucleoporin RAB/HRB and exportin XPO1/CRM1.</text>
</comment>
<comment type="subcellular location">
    <subcellularLocation>
        <location evidence="1">Virion</location>
    </subcellularLocation>
    <subcellularLocation>
        <location evidence="1">Host nucleus</location>
    </subcellularLocation>
</comment>
<comment type="alternative products">
    <event type="alternative splicing"/>
    <isoform>
        <id>P13150-1</id>
        <name>NEP</name>
        <name>NS2</name>
        <sequence type="displayed"/>
    </isoform>
    <isoform>
        <id>P13142-1</id>
        <name>NS1</name>
        <sequence type="external"/>
    </isoform>
</comment>
<comment type="miscellaneous">
    <text>Average number present in a viral particle is estimated to be 130-200 molecules.</text>
</comment>
<comment type="similarity">
    <text evidence="1">Belongs to the influenza viruses NEP family.</text>
</comment>